<keyword id="KW-0145">Chemotaxis</keyword>
<keyword id="KW-0202">Cytokine</keyword>
<keyword id="KW-1015">Disulfide bond</keyword>
<keyword id="KW-0395">Inflammatory response</keyword>
<keyword id="KW-0873">Pyrrolidone carboxylic acid</keyword>
<keyword id="KW-1185">Reference proteome</keyword>
<keyword id="KW-0964">Secreted</keyword>
<keyword id="KW-0732">Signal</keyword>
<accession>P42831</accession>
<comment type="function">
    <text evidence="2 3">Acts as a ligand for C-C chemokine receptor CCR2 (By similarity). Signals through binding and activation of CCR2 and induces a strong chemotactic response and mobilization of intracellular calcium ions (By similarity). Exhibits a chemotactic activity for monocytes and basophils but not neutrophils or eosinophils (By similarity). Plays an important role in mediating peripheral nerve injury-induced neuropathic pain (By similarity). Increases NMDA-mediated synaptic transmission in both dopamine D1 and D2 receptor-containing neurons, which may be caused by MAPK/ERK-dependent phosphorylation of GRIN2B/NMDAR2B (By similarity).</text>
</comment>
<comment type="subunit">
    <text evidence="3">Monomer or homodimer; in equilibrium. Is tethered on endothelial cells by glycosaminoglycan (GAG) side chains of proteoglycans. Interacts with TNFAIP6 (via Link domain).</text>
</comment>
<comment type="subcellular location">
    <subcellularLocation>
        <location evidence="3">Secreted</location>
    </subcellularLocation>
</comment>
<comment type="PTM">
    <text evidence="3">Processing at the N-terminus can regulate receptor and target cell selectivity (By similarity). Deletion of the N-terminal residue converts it from an activator of basophil to an eosinophil chemoattractant (By similarity).</text>
</comment>
<comment type="PTM">
    <text evidence="3">N-Glycosylated.</text>
</comment>
<comment type="similarity">
    <text evidence="4">Belongs to the intercrine beta (chemokine CC) family.</text>
</comment>
<reference key="1">
    <citation type="journal article" date="1994" name="Biochem. Biophys. Res. Commun.">
        <title>Porcine luteal cells express monocyte chemoattractant protein-1 (MCP-1): analysis by polymerase chain reaction and cDNA cloning.</title>
        <authorList>
            <person name="Hosang K."/>
            <person name="Knoke I."/>
            <person name="Klaudiny J."/>
            <person name="Wempe F."/>
            <person name="Wuttke W."/>
            <person name="Scheit K.H."/>
        </authorList>
    </citation>
    <scope>NUCLEOTIDE SEQUENCE [MRNA]</scope>
</reference>
<reference key="2">
    <citation type="submission" date="1994-07" db="EMBL/GenBank/DDBJ databases">
        <authorList>
            <person name="Zach O.R.F."/>
        </authorList>
    </citation>
    <scope>NUCLEOTIDE SEQUENCE [MRNA]</scope>
    <source>
        <tissue>Brain</tissue>
    </source>
</reference>
<name>CCL2_PIG</name>
<organism>
    <name type="scientific">Sus scrofa</name>
    <name type="common">Pig</name>
    <dbReference type="NCBI Taxonomy" id="9823"/>
    <lineage>
        <taxon>Eukaryota</taxon>
        <taxon>Metazoa</taxon>
        <taxon>Chordata</taxon>
        <taxon>Craniata</taxon>
        <taxon>Vertebrata</taxon>
        <taxon>Euteleostomi</taxon>
        <taxon>Mammalia</taxon>
        <taxon>Eutheria</taxon>
        <taxon>Laurasiatheria</taxon>
        <taxon>Artiodactyla</taxon>
        <taxon>Suina</taxon>
        <taxon>Suidae</taxon>
        <taxon>Sus</taxon>
    </lineage>
</organism>
<protein>
    <recommendedName>
        <fullName>C-C motif chemokine 2</fullName>
    </recommendedName>
    <alternativeName>
        <fullName>Monocyte chemoattractant protein 1</fullName>
    </alternativeName>
    <alternativeName>
        <fullName>Monocyte chemotactic protein 1</fullName>
        <shortName>MCP-1</shortName>
    </alternativeName>
    <alternativeName>
        <fullName>Small-inducible cytokine A2</fullName>
    </alternativeName>
</protein>
<evidence type="ECO:0000250" key="1"/>
<evidence type="ECO:0000250" key="2">
    <source>
        <dbReference type="UniProtKB" id="P10148"/>
    </source>
</evidence>
<evidence type="ECO:0000250" key="3">
    <source>
        <dbReference type="UniProtKB" id="P13500"/>
    </source>
</evidence>
<evidence type="ECO:0000305" key="4"/>
<sequence>MKVSAALLCLLLTAATFCTQVLAQPDAINSPVTCCYTLTSKKISMQRLMSYRRVTSSKCPKEAVIFKTIAGKEICAEPKQKWVQDSISHLDKKNQTPKP</sequence>
<gene>
    <name type="primary">CCL2</name>
    <name type="synonym">SCYA2</name>
</gene>
<proteinExistence type="inferred from homology"/>
<feature type="signal peptide" evidence="1">
    <location>
        <begin position="1"/>
        <end position="23"/>
    </location>
</feature>
<feature type="chain" id="PRO_0000005153" description="C-C motif chemokine 2">
    <location>
        <begin position="24"/>
        <end position="99"/>
    </location>
</feature>
<feature type="modified residue" description="Pyrrolidone carboxylic acid" evidence="3">
    <location>
        <position position="24"/>
    </location>
</feature>
<feature type="disulfide bond" evidence="1">
    <location>
        <begin position="34"/>
        <end position="59"/>
    </location>
</feature>
<feature type="disulfide bond" evidence="1">
    <location>
        <begin position="35"/>
        <end position="75"/>
    </location>
</feature>
<dbReference type="EMBL" id="Z48479">
    <property type="protein sequence ID" value="CAA88370.1"/>
    <property type="molecule type" value="mRNA"/>
</dbReference>
<dbReference type="EMBL" id="X79416">
    <property type="protein sequence ID" value="CAA55945.1"/>
    <property type="molecule type" value="mRNA"/>
</dbReference>
<dbReference type="PIR" id="JC2136">
    <property type="entry name" value="JC2136"/>
</dbReference>
<dbReference type="RefSeq" id="NP_999379.1">
    <property type="nucleotide sequence ID" value="NM_214214.1"/>
</dbReference>
<dbReference type="SMR" id="P42831"/>
<dbReference type="FunCoup" id="P42831">
    <property type="interactions" value="173"/>
</dbReference>
<dbReference type="STRING" id="9823.ENSSSCP00000018779"/>
<dbReference type="PaxDb" id="9823-ENSSSCP00000018779"/>
<dbReference type="Ensembl" id="ENSSSCT00000019290.5">
    <property type="protein sequence ID" value="ENSSSCP00000018779.2"/>
    <property type="gene ID" value="ENSSSCG00000017723.5"/>
</dbReference>
<dbReference type="Ensembl" id="ENSSSCT00015014476.1">
    <property type="protein sequence ID" value="ENSSSCP00015005616.1"/>
    <property type="gene ID" value="ENSSSCG00015010935.1"/>
</dbReference>
<dbReference type="Ensembl" id="ENSSSCT00030075613.1">
    <property type="protein sequence ID" value="ENSSSCP00030034551.1"/>
    <property type="gene ID" value="ENSSSCG00030054240.1"/>
</dbReference>
<dbReference type="Ensembl" id="ENSSSCT00035084936.1">
    <property type="protein sequence ID" value="ENSSSCP00035035342.1"/>
    <property type="gene ID" value="ENSSSCG00035063168.1"/>
</dbReference>
<dbReference type="Ensembl" id="ENSSSCT00040012972.1">
    <property type="protein sequence ID" value="ENSSSCP00040004899.1"/>
    <property type="gene ID" value="ENSSSCG00040010004.1"/>
</dbReference>
<dbReference type="Ensembl" id="ENSSSCT00045031268.1">
    <property type="protein sequence ID" value="ENSSSCP00045021669.1"/>
    <property type="gene ID" value="ENSSSCG00045018363.1"/>
</dbReference>
<dbReference type="Ensembl" id="ENSSSCT00050053082.1">
    <property type="protein sequence ID" value="ENSSSCP00050022292.1"/>
    <property type="gene ID" value="ENSSSCG00050039348.1"/>
</dbReference>
<dbReference type="Ensembl" id="ENSSSCT00055016609.1">
    <property type="protein sequence ID" value="ENSSSCP00055013103.1"/>
    <property type="gene ID" value="ENSSSCG00055008496.1"/>
</dbReference>
<dbReference type="Ensembl" id="ENSSSCT00060077021.1">
    <property type="protein sequence ID" value="ENSSSCP00060033287.1"/>
    <property type="gene ID" value="ENSSSCG00060056544.1"/>
</dbReference>
<dbReference type="Ensembl" id="ENSSSCT00065092116.1">
    <property type="protein sequence ID" value="ENSSSCP00065040308.1"/>
    <property type="gene ID" value="ENSSSCG00065067117.1"/>
</dbReference>
<dbReference type="Ensembl" id="ENSSSCT00070015610.1">
    <property type="protein sequence ID" value="ENSSSCP00070012916.1"/>
    <property type="gene ID" value="ENSSSCG00070008075.1"/>
</dbReference>
<dbReference type="Ensembl" id="ENSSSCT00085041638">
    <property type="protein sequence ID" value="ENSSSCP00085029072"/>
    <property type="gene ID" value="ENSSSCG00085021837"/>
</dbReference>
<dbReference type="Ensembl" id="ENSSSCT00105035422">
    <property type="protein sequence ID" value="ENSSSCP00105024686"/>
    <property type="gene ID" value="ENSSSCG00105018423"/>
</dbReference>
<dbReference type="Ensembl" id="ENSSSCT00110058536">
    <property type="protein sequence ID" value="ENSSSCP00110040787"/>
    <property type="gene ID" value="ENSSSCG00110030644"/>
</dbReference>
<dbReference type="Ensembl" id="ENSSSCT00115035215">
    <property type="protein sequence ID" value="ENSSSCP00115033396"/>
    <property type="gene ID" value="ENSSSCG00115019893"/>
</dbReference>
<dbReference type="Ensembl" id="ENSSSCT00130039788">
    <property type="protein sequence ID" value="ENSSSCP00130028127"/>
    <property type="gene ID" value="ENSSSCG00130020477"/>
</dbReference>
<dbReference type="GeneID" id="397422"/>
<dbReference type="KEGG" id="ssc:397422"/>
<dbReference type="CTD" id="6347"/>
<dbReference type="eggNOG" id="ENOG502S6ZP">
    <property type="taxonomic scope" value="Eukaryota"/>
</dbReference>
<dbReference type="GeneTree" id="ENSGT01130000278316"/>
<dbReference type="HOGENOM" id="CLU_141716_1_0_1"/>
<dbReference type="InParanoid" id="P42831"/>
<dbReference type="OMA" id="PNQKWVK"/>
<dbReference type="OrthoDB" id="8934837at2759"/>
<dbReference type="TreeFam" id="TF334888"/>
<dbReference type="Reactome" id="R-SSC-380108">
    <property type="pathway name" value="Chemokine receptors bind chemokines"/>
</dbReference>
<dbReference type="Proteomes" id="UP000008227">
    <property type="component" value="Chromosome 12"/>
</dbReference>
<dbReference type="Proteomes" id="UP000314985">
    <property type="component" value="Chromosome 12"/>
</dbReference>
<dbReference type="Proteomes" id="UP000694570">
    <property type="component" value="Unplaced"/>
</dbReference>
<dbReference type="Proteomes" id="UP000694571">
    <property type="component" value="Unplaced"/>
</dbReference>
<dbReference type="Proteomes" id="UP000694720">
    <property type="component" value="Unplaced"/>
</dbReference>
<dbReference type="Proteomes" id="UP000694722">
    <property type="component" value="Unplaced"/>
</dbReference>
<dbReference type="Proteomes" id="UP000694723">
    <property type="component" value="Unplaced"/>
</dbReference>
<dbReference type="Proteomes" id="UP000694724">
    <property type="component" value="Unplaced"/>
</dbReference>
<dbReference type="Proteomes" id="UP000694725">
    <property type="component" value="Unplaced"/>
</dbReference>
<dbReference type="Proteomes" id="UP000694726">
    <property type="component" value="Unplaced"/>
</dbReference>
<dbReference type="Proteomes" id="UP000694727">
    <property type="component" value="Unplaced"/>
</dbReference>
<dbReference type="Proteomes" id="UP000694728">
    <property type="component" value="Unplaced"/>
</dbReference>
<dbReference type="Bgee" id="ENSSSCG00000017723">
    <property type="expression patterns" value="Expressed in endocardial endothelium and 42 other cell types or tissues"/>
</dbReference>
<dbReference type="ExpressionAtlas" id="P42831">
    <property type="expression patterns" value="baseline and differential"/>
</dbReference>
<dbReference type="GO" id="GO:0005615">
    <property type="term" value="C:extracellular space"/>
    <property type="evidence" value="ECO:0000318"/>
    <property type="project" value="GO_Central"/>
</dbReference>
<dbReference type="GO" id="GO:0048020">
    <property type="term" value="F:CCR chemokine receptor binding"/>
    <property type="evidence" value="ECO:0000318"/>
    <property type="project" value="GO_Central"/>
</dbReference>
<dbReference type="GO" id="GO:0008009">
    <property type="term" value="F:chemokine activity"/>
    <property type="evidence" value="ECO:0000318"/>
    <property type="project" value="GO_Central"/>
</dbReference>
<dbReference type="GO" id="GO:0061844">
    <property type="term" value="P:antimicrobial humoral immune response mediated by antimicrobial peptide"/>
    <property type="evidence" value="ECO:0000318"/>
    <property type="project" value="GO_Central"/>
</dbReference>
<dbReference type="GO" id="GO:0043615">
    <property type="term" value="P:astrocyte cell migration"/>
    <property type="evidence" value="ECO:0007669"/>
    <property type="project" value="Ensembl"/>
</dbReference>
<dbReference type="GO" id="GO:0044344">
    <property type="term" value="P:cellular response to fibroblast growth factor stimulus"/>
    <property type="evidence" value="ECO:0007669"/>
    <property type="project" value="Ensembl"/>
</dbReference>
<dbReference type="GO" id="GO:0071347">
    <property type="term" value="P:cellular response to interleukin-1"/>
    <property type="evidence" value="ECO:0007669"/>
    <property type="project" value="Ensembl"/>
</dbReference>
<dbReference type="GO" id="GO:0071356">
    <property type="term" value="P:cellular response to tumor necrosis factor"/>
    <property type="evidence" value="ECO:0007669"/>
    <property type="project" value="Ensembl"/>
</dbReference>
<dbReference type="GO" id="GO:0071346">
    <property type="term" value="P:cellular response to type II interferon"/>
    <property type="evidence" value="ECO:0007669"/>
    <property type="project" value="Ensembl"/>
</dbReference>
<dbReference type="GO" id="GO:0070098">
    <property type="term" value="P:chemokine-mediated signaling pathway"/>
    <property type="evidence" value="ECO:0000318"/>
    <property type="project" value="GO_Central"/>
</dbReference>
<dbReference type="GO" id="GO:0007010">
    <property type="term" value="P:cytoskeleton organization"/>
    <property type="evidence" value="ECO:0007669"/>
    <property type="project" value="Ensembl"/>
</dbReference>
<dbReference type="GO" id="GO:0048245">
    <property type="term" value="P:eosinophil chemotaxis"/>
    <property type="evidence" value="ECO:0000318"/>
    <property type="project" value="GO_Central"/>
</dbReference>
<dbReference type="GO" id="GO:0006954">
    <property type="term" value="P:inflammatory response"/>
    <property type="evidence" value="ECO:0000318"/>
    <property type="project" value="GO_Central"/>
</dbReference>
<dbReference type="GO" id="GO:0048246">
    <property type="term" value="P:macrophage chemotaxis"/>
    <property type="evidence" value="ECO:0007669"/>
    <property type="project" value="Ensembl"/>
</dbReference>
<dbReference type="GO" id="GO:0002548">
    <property type="term" value="P:monocyte chemotaxis"/>
    <property type="evidence" value="ECO:0007669"/>
    <property type="project" value="Ensembl"/>
</dbReference>
<dbReference type="GO" id="GO:2000134">
    <property type="term" value="P:negative regulation of G1/S transition of mitotic cell cycle"/>
    <property type="evidence" value="ECO:0007669"/>
    <property type="project" value="Ensembl"/>
</dbReference>
<dbReference type="GO" id="GO:0034351">
    <property type="term" value="P:negative regulation of glial cell apoptotic process"/>
    <property type="evidence" value="ECO:0007669"/>
    <property type="project" value="Ensembl"/>
</dbReference>
<dbReference type="GO" id="GO:2000502">
    <property type="term" value="P:negative regulation of natural killer cell chemotaxis"/>
    <property type="evidence" value="ECO:0007669"/>
    <property type="project" value="Ensembl"/>
</dbReference>
<dbReference type="GO" id="GO:0043524">
    <property type="term" value="P:negative regulation of neuron apoptotic process"/>
    <property type="evidence" value="ECO:0007669"/>
    <property type="project" value="Ensembl"/>
</dbReference>
<dbReference type="GO" id="GO:1905563">
    <property type="term" value="P:negative regulation of vascular endothelial cell proliferation"/>
    <property type="evidence" value="ECO:0007669"/>
    <property type="project" value="Ensembl"/>
</dbReference>
<dbReference type="GO" id="GO:0090280">
    <property type="term" value="P:positive regulation of calcium ion import"/>
    <property type="evidence" value="ECO:0007669"/>
    <property type="project" value="Ensembl"/>
</dbReference>
<dbReference type="GO" id="GO:0030335">
    <property type="term" value="P:positive regulation of cell migration"/>
    <property type="evidence" value="ECO:0000318"/>
    <property type="project" value="GO_Central"/>
</dbReference>
<dbReference type="GO" id="GO:2000353">
    <property type="term" value="P:positive regulation of endothelial cell apoptotic process"/>
    <property type="evidence" value="ECO:0007669"/>
    <property type="project" value="Ensembl"/>
</dbReference>
<dbReference type="GO" id="GO:0051968">
    <property type="term" value="P:positive regulation of synaptic transmission, glutamatergic"/>
    <property type="evidence" value="ECO:0000250"/>
    <property type="project" value="UniProtKB"/>
</dbReference>
<dbReference type="GO" id="GO:0008360">
    <property type="term" value="P:regulation of cell shape"/>
    <property type="evidence" value="ECO:0007669"/>
    <property type="project" value="Ensembl"/>
</dbReference>
<dbReference type="GO" id="GO:0019233">
    <property type="term" value="P:sensory perception of pain"/>
    <property type="evidence" value="ECO:0000250"/>
    <property type="project" value="UniProtKB"/>
</dbReference>
<dbReference type="CDD" id="cd00272">
    <property type="entry name" value="Chemokine_CC"/>
    <property type="match status" value="1"/>
</dbReference>
<dbReference type="FunFam" id="2.40.50.40:FF:000002">
    <property type="entry name" value="C-C motif chemokine"/>
    <property type="match status" value="1"/>
</dbReference>
<dbReference type="Gene3D" id="2.40.50.40">
    <property type="match status" value="1"/>
</dbReference>
<dbReference type="InterPro" id="IPR039809">
    <property type="entry name" value="Chemokine_b/g/d"/>
</dbReference>
<dbReference type="InterPro" id="IPR000827">
    <property type="entry name" value="Chemokine_CC_CS"/>
</dbReference>
<dbReference type="InterPro" id="IPR001811">
    <property type="entry name" value="Chemokine_IL8-like_dom"/>
</dbReference>
<dbReference type="InterPro" id="IPR036048">
    <property type="entry name" value="Interleukin_8-like_sf"/>
</dbReference>
<dbReference type="PANTHER" id="PTHR12015:SF98">
    <property type="entry name" value="C-C MOTIF CHEMOKINE 2"/>
    <property type="match status" value="1"/>
</dbReference>
<dbReference type="PANTHER" id="PTHR12015">
    <property type="entry name" value="SMALL INDUCIBLE CYTOKINE A"/>
    <property type="match status" value="1"/>
</dbReference>
<dbReference type="Pfam" id="PF00048">
    <property type="entry name" value="IL8"/>
    <property type="match status" value="1"/>
</dbReference>
<dbReference type="SMART" id="SM00199">
    <property type="entry name" value="SCY"/>
    <property type="match status" value="1"/>
</dbReference>
<dbReference type="SUPFAM" id="SSF54117">
    <property type="entry name" value="Interleukin 8-like chemokines"/>
    <property type="match status" value="1"/>
</dbReference>
<dbReference type="PROSITE" id="PS00472">
    <property type="entry name" value="SMALL_CYTOKINES_CC"/>
    <property type="match status" value="1"/>
</dbReference>